<name>HIS2_METBF</name>
<organism>
    <name type="scientific">Methanosarcina barkeri (strain Fusaro / DSM 804)</name>
    <dbReference type="NCBI Taxonomy" id="269797"/>
    <lineage>
        <taxon>Archaea</taxon>
        <taxon>Methanobacteriati</taxon>
        <taxon>Methanobacteriota</taxon>
        <taxon>Stenosarchaea group</taxon>
        <taxon>Methanomicrobia</taxon>
        <taxon>Methanosarcinales</taxon>
        <taxon>Methanosarcinaceae</taxon>
        <taxon>Methanosarcina</taxon>
    </lineage>
</organism>
<evidence type="ECO:0000255" key="1">
    <source>
        <dbReference type="HAMAP-Rule" id="MF_01020"/>
    </source>
</evidence>
<sequence>MPDADLSILNRVYEIILDRKQNYDERSYVCKLLNHRKGMNKILEKVGEESIETILAVRNENHEEIVSESSDLIFHLLVMLAANNVTLDEIAAELSARHESMKRD</sequence>
<dbReference type="EC" id="3.6.1.31" evidence="1"/>
<dbReference type="EMBL" id="CP000099">
    <property type="protein sequence ID" value="AAZ71094.1"/>
    <property type="molecule type" value="Genomic_DNA"/>
</dbReference>
<dbReference type="SMR" id="Q46AJ8"/>
<dbReference type="STRING" id="269797.Mbar_A2166"/>
<dbReference type="PaxDb" id="269797-Mbar_A2166"/>
<dbReference type="KEGG" id="mba:Mbar_A2166"/>
<dbReference type="eggNOG" id="arCOG02677">
    <property type="taxonomic scope" value="Archaea"/>
</dbReference>
<dbReference type="HOGENOM" id="CLU_123337_0_0_2"/>
<dbReference type="OrthoDB" id="39686at2157"/>
<dbReference type="UniPathway" id="UPA00031">
    <property type="reaction ID" value="UER00007"/>
</dbReference>
<dbReference type="GO" id="GO:0005737">
    <property type="term" value="C:cytoplasm"/>
    <property type="evidence" value="ECO:0007669"/>
    <property type="project" value="UniProtKB-SubCell"/>
</dbReference>
<dbReference type="GO" id="GO:0005524">
    <property type="term" value="F:ATP binding"/>
    <property type="evidence" value="ECO:0007669"/>
    <property type="project" value="UniProtKB-KW"/>
</dbReference>
<dbReference type="GO" id="GO:0004636">
    <property type="term" value="F:phosphoribosyl-ATP diphosphatase activity"/>
    <property type="evidence" value="ECO:0007669"/>
    <property type="project" value="UniProtKB-UniRule"/>
</dbReference>
<dbReference type="GO" id="GO:0000105">
    <property type="term" value="P:L-histidine biosynthetic process"/>
    <property type="evidence" value="ECO:0007669"/>
    <property type="project" value="UniProtKB-UniRule"/>
</dbReference>
<dbReference type="CDD" id="cd11534">
    <property type="entry name" value="NTP-PPase_HisIE_like"/>
    <property type="match status" value="1"/>
</dbReference>
<dbReference type="Gene3D" id="1.10.287.1080">
    <property type="entry name" value="MazG-like"/>
    <property type="match status" value="1"/>
</dbReference>
<dbReference type="HAMAP" id="MF_01020">
    <property type="entry name" value="HisE"/>
    <property type="match status" value="1"/>
</dbReference>
<dbReference type="InterPro" id="IPR008179">
    <property type="entry name" value="HisE"/>
</dbReference>
<dbReference type="InterPro" id="IPR021130">
    <property type="entry name" value="PRib-ATP_PPHydrolase-like"/>
</dbReference>
<dbReference type="NCBIfam" id="TIGR03188">
    <property type="entry name" value="histidine_hisI"/>
    <property type="match status" value="1"/>
</dbReference>
<dbReference type="PANTHER" id="PTHR42945">
    <property type="entry name" value="HISTIDINE BIOSYNTHESIS BIFUNCTIONAL PROTEIN"/>
    <property type="match status" value="1"/>
</dbReference>
<dbReference type="PANTHER" id="PTHR42945:SF9">
    <property type="entry name" value="HISTIDINE BIOSYNTHESIS BIFUNCTIONAL PROTEIN HISIE"/>
    <property type="match status" value="1"/>
</dbReference>
<dbReference type="Pfam" id="PF01503">
    <property type="entry name" value="PRA-PH"/>
    <property type="match status" value="1"/>
</dbReference>
<dbReference type="SUPFAM" id="SSF101386">
    <property type="entry name" value="all-alpha NTP pyrophosphatases"/>
    <property type="match status" value="1"/>
</dbReference>
<proteinExistence type="inferred from homology"/>
<gene>
    <name evidence="1" type="primary">hisE</name>
    <name type="ordered locus">Mbar_A2166</name>
</gene>
<comment type="catalytic activity">
    <reaction evidence="1">
        <text>1-(5-phospho-beta-D-ribosyl)-ATP + H2O = 1-(5-phospho-beta-D-ribosyl)-5'-AMP + diphosphate + H(+)</text>
        <dbReference type="Rhea" id="RHEA:22828"/>
        <dbReference type="ChEBI" id="CHEBI:15377"/>
        <dbReference type="ChEBI" id="CHEBI:15378"/>
        <dbReference type="ChEBI" id="CHEBI:33019"/>
        <dbReference type="ChEBI" id="CHEBI:59457"/>
        <dbReference type="ChEBI" id="CHEBI:73183"/>
        <dbReference type="EC" id="3.6.1.31"/>
    </reaction>
</comment>
<comment type="pathway">
    <text evidence="1">Amino-acid biosynthesis; L-histidine biosynthesis; L-histidine from 5-phospho-alpha-D-ribose 1-diphosphate: step 2/9.</text>
</comment>
<comment type="subcellular location">
    <subcellularLocation>
        <location evidence="1">Cytoplasm</location>
    </subcellularLocation>
</comment>
<comment type="similarity">
    <text evidence="1">Belongs to the PRA-PH family.</text>
</comment>
<protein>
    <recommendedName>
        <fullName evidence="1">Phosphoribosyl-ATP pyrophosphatase</fullName>
        <shortName evidence="1">PRA-PH</shortName>
        <ecNumber evidence="1">3.6.1.31</ecNumber>
    </recommendedName>
</protein>
<keyword id="KW-0028">Amino-acid biosynthesis</keyword>
<keyword id="KW-0067">ATP-binding</keyword>
<keyword id="KW-0963">Cytoplasm</keyword>
<keyword id="KW-0368">Histidine biosynthesis</keyword>
<keyword id="KW-0378">Hydrolase</keyword>
<keyword id="KW-0547">Nucleotide-binding</keyword>
<feature type="chain" id="PRO_0000230197" description="Phosphoribosyl-ATP pyrophosphatase">
    <location>
        <begin position="1"/>
        <end position="104"/>
    </location>
</feature>
<reference key="1">
    <citation type="journal article" date="2006" name="J. Bacteriol.">
        <title>The Methanosarcina barkeri genome: comparative analysis with Methanosarcina acetivorans and Methanosarcina mazei reveals extensive rearrangement within methanosarcinal genomes.</title>
        <authorList>
            <person name="Maeder D.L."/>
            <person name="Anderson I."/>
            <person name="Brettin T.S."/>
            <person name="Bruce D.C."/>
            <person name="Gilna P."/>
            <person name="Han C.S."/>
            <person name="Lapidus A."/>
            <person name="Metcalf W.W."/>
            <person name="Saunders E."/>
            <person name="Tapia R."/>
            <person name="Sowers K.R."/>
        </authorList>
    </citation>
    <scope>NUCLEOTIDE SEQUENCE [LARGE SCALE GENOMIC DNA]</scope>
    <source>
        <strain>Fusaro / DSM 804</strain>
    </source>
</reference>
<accession>Q46AJ8</accession>